<protein>
    <recommendedName>
        <fullName evidence="1">Protein SGT1 homolog B</fullName>
        <shortName evidence="17 18">AtSGT1b</shortName>
    </recommendedName>
    <alternativeName>
        <fullName>Protein ENHANCED DOWNY MILDEW 1</fullName>
    </alternativeName>
    <alternativeName>
        <fullName>Protein ENHANCER OF TIR1-1 AUXIN RESISTANCE 3</fullName>
    </alternativeName>
    <alternativeName>
        <fullName evidence="1">Suppressor of G2 allele of SKP1 homolog B</fullName>
    </alternativeName>
</protein>
<evidence type="ECO:0000250" key="1">
    <source>
        <dbReference type="UniProtKB" id="Q08446"/>
    </source>
</evidence>
<evidence type="ECO:0000255" key="2">
    <source>
        <dbReference type="PROSITE-ProRule" id="PRU00386"/>
    </source>
</evidence>
<evidence type="ECO:0000255" key="3">
    <source>
        <dbReference type="PROSITE-ProRule" id="PRU00547"/>
    </source>
</evidence>
<evidence type="ECO:0000256" key="4">
    <source>
        <dbReference type="SAM" id="MobiDB-lite"/>
    </source>
</evidence>
<evidence type="ECO:0000269" key="5">
    <source>
    </source>
</evidence>
<evidence type="ECO:0000269" key="6">
    <source>
    </source>
</evidence>
<evidence type="ECO:0000269" key="7">
    <source>
    </source>
</evidence>
<evidence type="ECO:0000269" key="8">
    <source>
    </source>
</evidence>
<evidence type="ECO:0000269" key="9">
    <source>
    </source>
</evidence>
<evidence type="ECO:0000269" key="10">
    <source>
    </source>
</evidence>
<evidence type="ECO:0000269" key="11">
    <source>
    </source>
</evidence>
<evidence type="ECO:0000269" key="12">
    <source>
    </source>
</evidence>
<evidence type="ECO:0000269" key="13">
    <source>
    </source>
</evidence>
<evidence type="ECO:0000269" key="14">
    <source>
    </source>
</evidence>
<evidence type="ECO:0000269" key="15">
    <source>
    </source>
</evidence>
<evidence type="ECO:0000269" key="16">
    <source>
    </source>
</evidence>
<evidence type="ECO:0000303" key="17">
    <source>
    </source>
</evidence>
<evidence type="ECO:0000303" key="18">
    <source>
    </source>
</evidence>
<evidence type="ECO:0000305" key="19"/>
<evidence type="ECO:0000312" key="20">
    <source>
        <dbReference type="Araport" id="AT4G11260"/>
    </source>
</evidence>
<evidence type="ECO:0000312" key="21">
    <source>
        <dbReference type="EMBL" id="CAB51410.1"/>
    </source>
</evidence>
<dbReference type="EMBL" id="AF439976">
    <property type="protein sequence ID" value="AAL33612.1"/>
    <property type="molecule type" value="mRNA"/>
</dbReference>
<dbReference type="EMBL" id="AJ318019">
    <property type="protein sequence ID" value="CAC85266.1"/>
    <property type="molecule type" value="mRNA"/>
</dbReference>
<dbReference type="EMBL" id="AL096882">
    <property type="protein sequence ID" value="CAB51410.1"/>
    <property type="molecule type" value="Genomic_DNA"/>
</dbReference>
<dbReference type="EMBL" id="AL161531">
    <property type="protein sequence ID" value="CAB81227.1"/>
    <property type="molecule type" value="Genomic_DNA"/>
</dbReference>
<dbReference type="EMBL" id="CP002687">
    <property type="protein sequence ID" value="AEE82990.1"/>
    <property type="molecule type" value="Genomic_DNA"/>
</dbReference>
<dbReference type="EMBL" id="AF370229">
    <property type="protein sequence ID" value="AAK44044.1"/>
    <property type="molecule type" value="mRNA"/>
</dbReference>
<dbReference type="EMBL" id="AF428340">
    <property type="protein sequence ID" value="AAL16270.1"/>
    <property type="molecule type" value="mRNA"/>
</dbReference>
<dbReference type="EMBL" id="AY150487">
    <property type="protein sequence ID" value="AAN12904.1"/>
    <property type="molecule type" value="mRNA"/>
</dbReference>
<dbReference type="EMBL" id="AY085464">
    <property type="protein sequence ID" value="AAM62690.1"/>
    <property type="molecule type" value="mRNA"/>
</dbReference>
<dbReference type="PIR" id="T13017">
    <property type="entry name" value="T13017"/>
</dbReference>
<dbReference type="RefSeq" id="NP_192865.1">
    <property type="nucleotide sequence ID" value="NM_117197.4"/>
</dbReference>
<dbReference type="SMR" id="Q9SUT5"/>
<dbReference type="BioGRID" id="12027">
    <property type="interactions" value="11"/>
</dbReference>
<dbReference type="DIP" id="DIP-41227N"/>
<dbReference type="FunCoup" id="Q9SUT5">
    <property type="interactions" value="4722"/>
</dbReference>
<dbReference type="IntAct" id="Q9SUT5">
    <property type="interactions" value="10"/>
</dbReference>
<dbReference type="MINT" id="Q9SUT5"/>
<dbReference type="STRING" id="3702.Q9SUT5"/>
<dbReference type="iPTMnet" id="Q9SUT5"/>
<dbReference type="MetOSite" id="Q9SUT5"/>
<dbReference type="PaxDb" id="3702-AT4G11260.1"/>
<dbReference type="ProteomicsDB" id="234576"/>
<dbReference type="DNASU" id="826728"/>
<dbReference type="EnsemblPlants" id="AT4G11260.1">
    <property type="protein sequence ID" value="AT4G11260.1"/>
    <property type="gene ID" value="AT4G11260"/>
</dbReference>
<dbReference type="GeneID" id="826728"/>
<dbReference type="Gramene" id="AT4G11260.1">
    <property type="protein sequence ID" value="AT4G11260.1"/>
    <property type="gene ID" value="AT4G11260"/>
</dbReference>
<dbReference type="KEGG" id="ath:AT4G11260"/>
<dbReference type="Araport" id="AT4G11260"/>
<dbReference type="TAIR" id="AT4G11260">
    <property type="gene designation" value="SGT1B"/>
</dbReference>
<dbReference type="eggNOG" id="KOG0376">
    <property type="taxonomic scope" value="Eukaryota"/>
</dbReference>
<dbReference type="eggNOG" id="KOG1309">
    <property type="taxonomic scope" value="Eukaryota"/>
</dbReference>
<dbReference type="HOGENOM" id="CLU_039532_1_0_1"/>
<dbReference type="InParanoid" id="Q9SUT5"/>
<dbReference type="OMA" id="WIKKCEE"/>
<dbReference type="OrthoDB" id="1898560at2759"/>
<dbReference type="PhylomeDB" id="Q9SUT5"/>
<dbReference type="CD-CODE" id="4299E36E">
    <property type="entry name" value="Nucleolus"/>
</dbReference>
<dbReference type="PRO" id="PR:Q9SUT5"/>
<dbReference type="Proteomes" id="UP000006548">
    <property type="component" value="Chromosome 4"/>
</dbReference>
<dbReference type="ExpressionAtlas" id="Q9SUT5">
    <property type="expression patterns" value="baseline and differential"/>
</dbReference>
<dbReference type="GO" id="GO:0005737">
    <property type="term" value="C:cytoplasm"/>
    <property type="evidence" value="ECO:0000314"/>
    <property type="project" value="UniProtKB"/>
</dbReference>
<dbReference type="GO" id="GO:0005829">
    <property type="term" value="C:cytosol"/>
    <property type="evidence" value="ECO:0007005"/>
    <property type="project" value="TAIR"/>
</dbReference>
<dbReference type="GO" id="GO:0005634">
    <property type="term" value="C:nucleus"/>
    <property type="evidence" value="ECO:0000314"/>
    <property type="project" value="UniProtKB"/>
</dbReference>
<dbReference type="GO" id="GO:0019005">
    <property type="term" value="C:SCF ubiquitin ligase complex"/>
    <property type="evidence" value="ECO:0000304"/>
    <property type="project" value="TAIR"/>
</dbReference>
<dbReference type="GO" id="GO:0051087">
    <property type="term" value="F:protein-folding chaperone binding"/>
    <property type="evidence" value="ECO:0007669"/>
    <property type="project" value="InterPro"/>
</dbReference>
<dbReference type="GO" id="GO:0009734">
    <property type="term" value="P:auxin-activated signaling pathway"/>
    <property type="evidence" value="ECO:0000315"/>
    <property type="project" value="TAIR"/>
</dbReference>
<dbReference type="GO" id="GO:0050832">
    <property type="term" value="P:defense response to fungus"/>
    <property type="evidence" value="ECO:0000315"/>
    <property type="project" value="TAIR"/>
</dbReference>
<dbReference type="GO" id="GO:0009793">
    <property type="term" value="P:embryo development ending in seed dormancy"/>
    <property type="evidence" value="ECO:0000316"/>
    <property type="project" value="TAIR"/>
</dbReference>
<dbReference type="GO" id="GO:0045087">
    <property type="term" value="P:innate immune response"/>
    <property type="evidence" value="ECO:0007669"/>
    <property type="project" value="UniProtKB-KW"/>
</dbReference>
<dbReference type="GO" id="GO:0009867">
    <property type="term" value="P:jasmonic acid mediated signaling pathway"/>
    <property type="evidence" value="ECO:0000315"/>
    <property type="project" value="TAIR"/>
</dbReference>
<dbReference type="GO" id="GO:0010187">
    <property type="term" value="P:negative regulation of seed germination"/>
    <property type="evidence" value="ECO:0000315"/>
    <property type="project" value="TAIR"/>
</dbReference>
<dbReference type="GO" id="GO:0030163">
    <property type="term" value="P:protein catabolic process"/>
    <property type="evidence" value="ECO:0000315"/>
    <property type="project" value="TAIR"/>
</dbReference>
<dbReference type="GO" id="GO:1900150">
    <property type="term" value="P:regulation of defense response to fungus"/>
    <property type="evidence" value="ECO:0000315"/>
    <property type="project" value="UniProtKB"/>
</dbReference>
<dbReference type="GO" id="GO:0009408">
    <property type="term" value="P:response to heat"/>
    <property type="evidence" value="ECO:0000315"/>
    <property type="project" value="UniProtKB"/>
</dbReference>
<dbReference type="GO" id="GO:0006511">
    <property type="term" value="P:ubiquitin-dependent protein catabolic process"/>
    <property type="evidence" value="ECO:0000315"/>
    <property type="project" value="TAIR"/>
</dbReference>
<dbReference type="CDD" id="cd06466">
    <property type="entry name" value="p23_CS_SGT1_like"/>
    <property type="match status" value="1"/>
</dbReference>
<dbReference type="FunFam" id="1.25.40.10:FF:000778">
    <property type="entry name" value="Protein SGT1 homolog"/>
    <property type="match status" value="1"/>
</dbReference>
<dbReference type="FunFam" id="2.60.40.790:FF:000034">
    <property type="entry name" value="Protein SGT1 homolog A"/>
    <property type="match status" value="1"/>
</dbReference>
<dbReference type="Gene3D" id="2.60.40.790">
    <property type="match status" value="1"/>
</dbReference>
<dbReference type="Gene3D" id="1.25.40.10">
    <property type="entry name" value="Tetratricopeptide repeat domain"/>
    <property type="match status" value="1"/>
</dbReference>
<dbReference type="InterPro" id="IPR007052">
    <property type="entry name" value="CS_dom"/>
</dbReference>
<dbReference type="InterPro" id="IPR008978">
    <property type="entry name" value="HSP20-like_chaperone"/>
</dbReference>
<dbReference type="InterPro" id="IPR007699">
    <property type="entry name" value="SGS_dom"/>
</dbReference>
<dbReference type="InterPro" id="IPR044563">
    <property type="entry name" value="Sgt1-like"/>
</dbReference>
<dbReference type="InterPro" id="IPR011990">
    <property type="entry name" value="TPR-like_helical_dom_sf"/>
</dbReference>
<dbReference type="InterPro" id="IPR019734">
    <property type="entry name" value="TPR_rpt"/>
</dbReference>
<dbReference type="PANTHER" id="PTHR45862">
    <property type="entry name" value="PROTEIN SGT1 HOMOLOG"/>
    <property type="match status" value="1"/>
</dbReference>
<dbReference type="Pfam" id="PF04969">
    <property type="entry name" value="CS"/>
    <property type="match status" value="1"/>
</dbReference>
<dbReference type="Pfam" id="PF05002">
    <property type="entry name" value="SGS"/>
    <property type="match status" value="1"/>
</dbReference>
<dbReference type="Pfam" id="PF13181">
    <property type="entry name" value="TPR_8"/>
    <property type="match status" value="1"/>
</dbReference>
<dbReference type="SMART" id="SM00028">
    <property type="entry name" value="TPR"/>
    <property type="match status" value="3"/>
</dbReference>
<dbReference type="SUPFAM" id="SSF49764">
    <property type="entry name" value="HSP20-like chaperones"/>
    <property type="match status" value="1"/>
</dbReference>
<dbReference type="SUPFAM" id="SSF48452">
    <property type="entry name" value="TPR-like"/>
    <property type="match status" value="1"/>
</dbReference>
<dbReference type="PROSITE" id="PS51203">
    <property type="entry name" value="CS"/>
    <property type="match status" value="1"/>
</dbReference>
<dbReference type="PROSITE" id="PS51048">
    <property type="entry name" value="SGS"/>
    <property type="match status" value="1"/>
</dbReference>
<dbReference type="PROSITE" id="PS50005">
    <property type="entry name" value="TPR"/>
    <property type="match status" value="3"/>
</dbReference>
<dbReference type="PROSITE" id="PS50293">
    <property type="entry name" value="TPR_REGION"/>
    <property type="match status" value="1"/>
</dbReference>
<reference key="1">
    <citation type="journal article" date="2002" name="Science">
        <title>The RAR1 interactor SGT1, an essential component of R gene-triggered disease resistance.</title>
        <authorList>
            <person name="Azevedo C."/>
            <person name="Sadanandom A."/>
            <person name="Kitagawa K."/>
            <person name="Freialdenhoven A."/>
            <person name="Shirasu K."/>
            <person name="Schulze-Lefert P."/>
        </authorList>
    </citation>
    <scope>NUCLEOTIDE SEQUENCE [MRNA]</scope>
    <scope>INTERACTION WITH RAR1</scope>
</reference>
<reference key="2">
    <citation type="journal article" date="2003" name="Proc. Natl. Acad. Sci. U.S.A.">
        <title>The evolution of early Foraminifera.</title>
        <authorList>
            <person name="Pawlowski J."/>
            <person name="Holzmann M."/>
            <person name="Berney C."/>
            <person name="Fahrni J."/>
            <person name="Gooday A.J."/>
            <person name="Cedhagen T."/>
            <person name="Habura A."/>
            <person name="Bowser S.S."/>
        </authorList>
    </citation>
    <scope>NUCLEOTIDE SEQUENCE [MRNA]</scope>
</reference>
<reference key="3">
    <citation type="journal article" date="1999" name="Nature">
        <title>Sequence and analysis of chromosome 4 of the plant Arabidopsis thaliana.</title>
        <authorList>
            <person name="Mayer K.F.X."/>
            <person name="Schueller C."/>
            <person name="Wambutt R."/>
            <person name="Murphy G."/>
            <person name="Volckaert G."/>
            <person name="Pohl T."/>
            <person name="Duesterhoeft A."/>
            <person name="Stiekema W."/>
            <person name="Entian K.-D."/>
            <person name="Terryn N."/>
            <person name="Harris B."/>
            <person name="Ansorge W."/>
            <person name="Brandt P."/>
            <person name="Grivell L.A."/>
            <person name="Rieger M."/>
            <person name="Weichselgartner M."/>
            <person name="de Simone V."/>
            <person name="Obermaier B."/>
            <person name="Mache R."/>
            <person name="Mueller M."/>
            <person name="Kreis M."/>
            <person name="Delseny M."/>
            <person name="Puigdomenech P."/>
            <person name="Watson M."/>
            <person name="Schmidtheini T."/>
            <person name="Reichert B."/>
            <person name="Portetelle D."/>
            <person name="Perez-Alonso M."/>
            <person name="Boutry M."/>
            <person name="Bancroft I."/>
            <person name="Vos P."/>
            <person name="Hoheisel J."/>
            <person name="Zimmermann W."/>
            <person name="Wedler H."/>
            <person name="Ridley P."/>
            <person name="Langham S.-A."/>
            <person name="McCullagh B."/>
            <person name="Bilham L."/>
            <person name="Robben J."/>
            <person name="van der Schueren J."/>
            <person name="Grymonprez B."/>
            <person name="Chuang Y.-J."/>
            <person name="Vandenbussche F."/>
            <person name="Braeken M."/>
            <person name="Weltjens I."/>
            <person name="Voet M."/>
            <person name="Bastiaens I."/>
            <person name="Aert R."/>
            <person name="Defoor E."/>
            <person name="Weitzenegger T."/>
            <person name="Bothe G."/>
            <person name="Ramsperger U."/>
            <person name="Hilbert H."/>
            <person name="Braun M."/>
            <person name="Holzer E."/>
            <person name="Brandt A."/>
            <person name="Peters S."/>
            <person name="van Staveren M."/>
            <person name="Dirkse W."/>
            <person name="Mooijman P."/>
            <person name="Klein Lankhorst R."/>
            <person name="Rose M."/>
            <person name="Hauf J."/>
            <person name="Koetter P."/>
            <person name="Berneiser S."/>
            <person name="Hempel S."/>
            <person name="Feldpausch M."/>
            <person name="Lamberth S."/>
            <person name="Van den Daele H."/>
            <person name="De Keyser A."/>
            <person name="Buysshaert C."/>
            <person name="Gielen J."/>
            <person name="Villarroel R."/>
            <person name="De Clercq R."/>
            <person name="van Montagu M."/>
            <person name="Rogers J."/>
            <person name="Cronin A."/>
            <person name="Quail M.A."/>
            <person name="Bray-Allen S."/>
            <person name="Clark L."/>
            <person name="Doggett J."/>
            <person name="Hall S."/>
            <person name="Kay M."/>
            <person name="Lennard N."/>
            <person name="McLay K."/>
            <person name="Mayes R."/>
            <person name="Pettett A."/>
            <person name="Rajandream M.A."/>
            <person name="Lyne M."/>
            <person name="Benes V."/>
            <person name="Rechmann S."/>
            <person name="Borkova D."/>
            <person name="Bloecker H."/>
            <person name="Scharfe M."/>
            <person name="Grimm M."/>
            <person name="Loehnert T.-H."/>
            <person name="Dose S."/>
            <person name="de Haan M."/>
            <person name="Maarse A.C."/>
            <person name="Schaefer M."/>
            <person name="Mueller-Auer S."/>
            <person name="Gabel C."/>
            <person name="Fuchs M."/>
            <person name="Fartmann B."/>
            <person name="Granderath K."/>
            <person name="Dauner D."/>
            <person name="Herzl A."/>
            <person name="Neumann S."/>
            <person name="Argiriou A."/>
            <person name="Vitale D."/>
            <person name="Liguori R."/>
            <person name="Piravandi E."/>
            <person name="Massenet O."/>
            <person name="Quigley F."/>
            <person name="Clabauld G."/>
            <person name="Muendlein A."/>
            <person name="Felber R."/>
            <person name="Schnabl S."/>
            <person name="Hiller R."/>
            <person name="Schmidt W."/>
            <person name="Lecharny A."/>
            <person name="Aubourg S."/>
            <person name="Chefdor F."/>
            <person name="Cooke R."/>
            <person name="Berger C."/>
            <person name="Monfort A."/>
            <person name="Casacuberta E."/>
            <person name="Gibbons T."/>
            <person name="Weber N."/>
            <person name="Vandenbol M."/>
            <person name="Bargues M."/>
            <person name="Terol J."/>
            <person name="Torres A."/>
            <person name="Perez-Perez A."/>
            <person name="Purnelle B."/>
            <person name="Bent E."/>
            <person name="Johnson S."/>
            <person name="Tacon D."/>
            <person name="Jesse T."/>
            <person name="Heijnen L."/>
            <person name="Schwarz S."/>
            <person name="Scholler P."/>
            <person name="Heber S."/>
            <person name="Francs P."/>
            <person name="Bielke C."/>
            <person name="Frishman D."/>
            <person name="Haase D."/>
            <person name="Lemcke K."/>
            <person name="Mewes H.-W."/>
            <person name="Stocker S."/>
            <person name="Zaccaria P."/>
            <person name="Bevan M."/>
            <person name="Wilson R.K."/>
            <person name="de la Bastide M."/>
            <person name="Habermann K."/>
            <person name="Parnell L."/>
            <person name="Dedhia N."/>
            <person name="Gnoj L."/>
            <person name="Schutz K."/>
            <person name="Huang E."/>
            <person name="Spiegel L."/>
            <person name="Sekhon M."/>
            <person name="Murray J."/>
            <person name="Sheet P."/>
            <person name="Cordes M."/>
            <person name="Abu-Threideh J."/>
            <person name="Stoneking T."/>
            <person name="Kalicki J."/>
            <person name="Graves T."/>
            <person name="Harmon G."/>
            <person name="Edwards J."/>
            <person name="Latreille P."/>
            <person name="Courtney L."/>
            <person name="Cloud J."/>
            <person name="Abbott A."/>
            <person name="Scott K."/>
            <person name="Johnson D."/>
            <person name="Minx P."/>
            <person name="Bentley D."/>
            <person name="Fulton B."/>
            <person name="Miller N."/>
            <person name="Greco T."/>
            <person name="Kemp K."/>
            <person name="Kramer J."/>
            <person name="Fulton L."/>
            <person name="Mardis E."/>
            <person name="Dante M."/>
            <person name="Pepin K."/>
            <person name="Hillier L.W."/>
            <person name="Nelson J."/>
            <person name="Spieth J."/>
            <person name="Ryan E."/>
            <person name="Andrews S."/>
            <person name="Geisel C."/>
            <person name="Layman D."/>
            <person name="Du H."/>
            <person name="Ali J."/>
            <person name="Berghoff A."/>
            <person name="Jones K."/>
            <person name="Drone K."/>
            <person name="Cotton M."/>
            <person name="Joshu C."/>
            <person name="Antonoiu B."/>
            <person name="Zidanic M."/>
            <person name="Strong C."/>
            <person name="Sun H."/>
            <person name="Lamar B."/>
            <person name="Yordan C."/>
            <person name="Ma P."/>
            <person name="Zhong J."/>
            <person name="Preston R."/>
            <person name="Vil D."/>
            <person name="Shekher M."/>
            <person name="Matero A."/>
            <person name="Shah R."/>
            <person name="Swaby I.K."/>
            <person name="O'Shaughnessy A."/>
            <person name="Rodriguez M."/>
            <person name="Hoffman J."/>
            <person name="Till S."/>
            <person name="Granat S."/>
            <person name="Shohdy N."/>
            <person name="Hasegawa A."/>
            <person name="Hameed A."/>
            <person name="Lodhi M."/>
            <person name="Johnson A."/>
            <person name="Chen E."/>
            <person name="Marra M.A."/>
            <person name="Martienssen R."/>
            <person name="McCombie W.R."/>
        </authorList>
    </citation>
    <scope>NUCLEOTIDE SEQUENCE [LARGE SCALE GENOMIC DNA]</scope>
    <source>
        <strain>cv. Columbia</strain>
    </source>
</reference>
<reference key="4">
    <citation type="journal article" date="2017" name="Plant J.">
        <title>Araport11: a complete reannotation of the Arabidopsis thaliana reference genome.</title>
        <authorList>
            <person name="Cheng C.Y."/>
            <person name="Krishnakumar V."/>
            <person name="Chan A.P."/>
            <person name="Thibaud-Nissen F."/>
            <person name="Schobel S."/>
            <person name="Town C.D."/>
        </authorList>
    </citation>
    <scope>GENOME REANNOTATION</scope>
    <source>
        <strain>cv. Columbia</strain>
    </source>
</reference>
<reference key="5">
    <citation type="journal article" date="2003" name="Science">
        <title>Empirical analysis of transcriptional activity in the Arabidopsis genome.</title>
        <authorList>
            <person name="Yamada K."/>
            <person name="Lim J."/>
            <person name="Dale J.M."/>
            <person name="Chen H."/>
            <person name="Shinn P."/>
            <person name="Palm C.J."/>
            <person name="Southwick A.M."/>
            <person name="Wu H.C."/>
            <person name="Kim C.J."/>
            <person name="Nguyen M."/>
            <person name="Pham P.K."/>
            <person name="Cheuk R.F."/>
            <person name="Karlin-Newmann G."/>
            <person name="Liu S.X."/>
            <person name="Lam B."/>
            <person name="Sakano H."/>
            <person name="Wu T."/>
            <person name="Yu G."/>
            <person name="Miranda M."/>
            <person name="Quach H.L."/>
            <person name="Tripp M."/>
            <person name="Chang C.H."/>
            <person name="Lee J.M."/>
            <person name="Toriumi M.J."/>
            <person name="Chan M.M."/>
            <person name="Tang C.C."/>
            <person name="Onodera C.S."/>
            <person name="Deng J.M."/>
            <person name="Akiyama K."/>
            <person name="Ansari Y."/>
            <person name="Arakawa T."/>
            <person name="Banh J."/>
            <person name="Banno F."/>
            <person name="Bowser L."/>
            <person name="Brooks S.Y."/>
            <person name="Carninci P."/>
            <person name="Chao Q."/>
            <person name="Choy N."/>
            <person name="Enju A."/>
            <person name="Goldsmith A.D."/>
            <person name="Gurjal M."/>
            <person name="Hansen N.F."/>
            <person name="Hayashizaki Y."/>
            <person name="Johnson-Hopson C."/>
            <person name="Hsuan V.W."/>
            <person name="Iida K."/>
            <person name="Karnes M."/>
            <person name="Khan S."/>
            <person name="Koesema E."/>
            <person name="Ishida J."/>
            <person name="Jiang P.X."/>
            <person name="Jones T."/>
            <person name="Kawai J."/>
            <person name="Kamiya A."/>
            <person name="Meyers C."/>
            <person name="Nakajima M."/>
            <person name="Narusaka M."/>
            <person name="Seki M."/>
            <person name="Sakurai T."/>
            <person name="Satou M."/>
            <person name="Tamse R."/>
            <person name="Vaysberg M."/>
            <person name="Wallender E.K."/>
            <person name="Wong C."/>
            <person name="Yamamura Y."/>
            <person name="Yuan S."/>
            <person name="Shinozaki K."/>
            <person name="Davis R.W."/>
            <person name="Theologis A."/>
            <person name="Ecker J.R."/>
        </authorList>
    </citation>
    <scope>NUCLEOTIDE SEQUENCE [LARGE SCALE MRNA]</scope>
    <source>
        <strain>cv. Columbia</strain>
    </source>
</reference>
<reference key="6">
    <citation type="submission" date="2002-03" db="EMBL/GenBank/DDBJ databases">
        <title>Full-length cDNA from Arabidopsis thaliana.</title>
        <authorList>
            <person name="Brover V.V."/>
            <person name="Troukhan M.E."/>
            <person name="Alexandrov N.A."/>
            <person name="Lu Y.-P."/>
            <person name="Flavell R.B."/>
            <person name="Feldmann K.A."/>
        </authorList>
    </citation>
    <scope>NUCLEOTIDE SEQUENCE [LARGE SCALE MRNA]</scope>
</reference>
<reference key="7">
    <citation type="journal article" date="2002" name="Plant Cell">
        <title>Arabidopsis SGT1b is required for defense signaling conferred by several downy mildew resistance genes.</title>
        <authorList>
            <person name="Toer M."/>
            <person name="Gordon P."/>
            <person name="Cuzick A."/>
            <person name="Eulgem T."/>
            <person name="Sinapidou E."/>
            <person name="Mert-Tuerk F."/>
            <person name="Can C."/>
            <person name="Dangl J.L."/>
            <person name="Holub E.B."/>
        </authorList>
    </citation>
    <scope>FUNCTION</scope>
    <scope>DISRUPTION PHENOTYPE</scope>
</reference>
<reference key="8">
    <citation type="journal article" date="2002" name="Science">
        <title>Regulatory role of SGT1 in early R gene-mediated plant defenses.</title>
        <authorList>
            <person name="Austin M.J."/>
            <person name="Muskett P."/>
            <person name="Kahn K."/>
            <person name="Feys B.J."/>
            <person name="Jones J.D."/>
            <person name="Parker J.E."/>
        </authorList>
    </citation>
    <scope>FUNCTION</scope>
    <scope>DISRUPTION PHENOTYPE</scope>
    <source>
        <strain>cv. Columbia</strain>
        <strain>cv. Landsberg erecta</strain>
    </source>
</reference>
<reference key="9">
    <citation type="journal article" date="2003" name="EMBO J.">
        <title>Cytosolic HSP90 associates with and modulates the Arabidopsis RPM1 disease resistance protein.</title>
        <authorList>
            <person name="Hubert D.A."/>
            <person name="Tornero P."/>
            <person name="Belkhadir Y."/>
            <person name="Krishna P."/>
            <person name="Takahashi A."/>
            <person name="Shirasu K."/>
            <person name="Dangl J.L."/>
        </authorList>
    </citation>
    <scope>INTERACTION WITH HSP90-2</scope>
</reference>
<reference key="10">
    <citation type="journal article" date="2003" name="Plant Cell">
        <title>Arabidopsis SGT1b is required for SCF(TIR1)-mediated auxin response.</title>
        <authorList>
            <person name="Gray W.M."/>
            <person name="Muskett P.R."/>
            <person name="Chuang H.W."/>
            <person name="Parker J.E."/>
        </authorList>
    </citation>
    <scope>FUNCTION</scope>
    <scope>DISRUPTION PHENOTYPE</scope>
</reference>
<reference key="11">
    <citation type="journal article" date="2005" name="Science">
        <title>Antagonistic control of disease resistance protein stability in the plant immune system.</title>
        <authorList>
            <person name="Holt B.F. III"/>
            <person name="Belkhadir Y."/>
            <person name="Dangl J.L."/>
        </authorList>
    </citation>
    <scope>FUNCTION</scope>
    <scope>DISRUPTION PHENOTYPE</scope>
</reference>
<reference key="12">
    <citation type="journal article" date="2006" name="EMBO J.">
        <title>Role of SGT1 in resistance protein accumulation in plant immunity.</title>
        <authorList>
            <person name="Azevedo C."/>
            <person name="Betsuyaku S."/>
            <person name="Peart J."/>
            <person name="Takahashi A."/>
            <person name="Noel L."/>
            <person name="Sadanandom A."/>
            <person name="Casais C."/>
            <person name="Parker J."/>
            <person name="Shirasu K."/>
        </authorList>
    </citation>
    <scope>FUNCTION</scope>
    <scope>INDUCTION</scope>
</reference>
<reference key="13">
    <citation type="journal article" date="2006" name="Proc. Natl. Acad. Sci. U.S.A.">
        <title>RAR1, a central player in plant immunity, is targeted by Pseudomonas syringae effector AvrB.</title>
        <authorList>
            <person name="Shang Y."/>
            <person name="Li X."/>
            <person name="Cui H."/>
            <person name="He P."/>
            <person name="Thilmony R."/>
            <person name="Chintamanani S."/>
            <person name="Zwiesler-Vollick J."/>
            <person name="Gopalan S."/>
            <person name="Tang X."/>
            <person name="Zhou J.M."/>
        </authorList>
    </citation>
    <scope>INTERACTION WITH RAR1</scope>
</reference>
<reference key="14">
    <citation type="journal article" date="2007" name="Plant Cell">
        <title>Interaction between SGT1 and cytosolic/nuclear HSC70 chaperones regulates Arabidopsis immune responses.</title>
        <authorList>
            <person name="Noel L.D."/>
            <person name="Cagna G."/>
            <person name="Stuttmann J."/>
            <person name="Wirthmueller L."/>
            <person name="Betsuyaku S."/>
            <person name="Witte C.P."/>
            <person name="Bhat R."/>
            <person name="Pochon N."/>
            <person name="Colby T."/>
            <person name="Parker J.E."/>
        </authorList>
    </citation>
    <scope>FUNCTION</scope>
    <scope>INTERACTION WITH HSC70-1 AND HSC70-3</scope>
    <scope>SUBCELLULAR LOCATION</scope>
    <scope>DISRUPTION PHENOTYPE</scope>
</reference>
<reference key="15">
    <citation type="journal article" date="2009" name="Plant Cell Physiol.">
        <title>Enhanced defense responses in Arabidopsis induced by the cell wall protein fractions from Pythium oligandrum require SGT1, RAR1, NPR1 and JAR1.</title>
        <authorList>
            <person name="Kawamura Y."/>
            <person name="Takenaka S."/>
            <person name="Hase S."/>
            <person name="Kubota M."/>
            <person name="Ichinose Y."/>
            <person name="Kanayama Y."/>
            <person name="Nakaho K."/>
            <person name="Klessig D.F."/>
            <person name="Takahashi H."/>
        </authorList>
    </citation>
    <scope>FUNCTION</scope>
</reference>
<reference key="16">
    <citation type="journal article" date="2009" name="Proc. Natl. Acad. Sci. U.S.A.">
        <title>Specific Arabidopsis HSP90.2 alleles recapitulate RAR1 cochaperone function in plant NB-LRR disease resistance protein regulation.</title>
        <authorList>
            <person name="Hubert D.A."/>
            <person name="He Y."/>
            <person name="McNulty B.C."/>
            <person name="Tornero P."/>
            <person name="Dangl J.L."/>
        </authorList>
    </citation>
    <scope>INTERACTION WITH HSP90-2</scope>
</reference>
<reference key="17">
    <citation type="journal article" date="2011" name="New Phytol.">
        <title>SGT1 contributes to coronatine signaling and Pseudomonas syringae pv. tomato disease symptom development in tomato and Arabidopsis.</title>
        <authorList>
            <person name="Uppalapati S.R."/>
            <person name="Ishiga Y."/>
            <person name="Ryu C.M."/>
            <person name="Ishiga T."/>
            <person name="Wang K."/>
            <person name="Noel L.D."/>
            <person name="Parker J.E."/>
            <person name="Mysore K.S."/>
        </authorList>
    </citation>
    <scope>FUNCTION</scope>
    <scope>DISRUPTION PHENOTYPE</scope>
</reference>
<keyword id="KW-0963">Cytoplasm</keyword>
<keyword id="KW-0391">Immunity</keyword>
<keyword id="KW-0399">Innate immunity</keyword>
<keyword id="KW-0539">Nucleus</keyword>
<keyword id="KW-0611">Plant defense</keyword>
<keyword id="KW-1185">Reference proteome</keyword>
<keyword id="KW-0677">Repeat</keyword>
<keyword id="KW-0802">TPR repeat</keyword>
<keyword id="KW-0833">Ubl conjugation pathway</keyword>
<sequence length="358" mass="39762">MAKELAEKAKEAFLDDDFDVAVDLYSKAIDLDPNCAAFFADRAQANIKIDNFTEAVVDANKAIELEPTLAKAYLRKGTACMKLEEYSTAKAALEKGASVAPNEPKFKKMIDECDLRIAEEEKDLVQPMPPSLPSSSTTPLATEADAPPVPIPAAPAKPMFRHEFYQKPEEAVVTIFAKKVPKENVTVEFGEQILSVVIDVAGEEAYHLQPRLFGKIIPEKCRFEVLSTKVEIRLAKAEIITWASLEYGKGQSVLPKPNVSSALSQRPVYPSSKPAKDWDKLEAEVKKQEKDEKLDGDAAMNKFFSDIYSSADEDMRRAMNKSFAESNGTVLSTNWKEVGTKKVESTPPDGMELKKWEY</sequence>
<organism>
    <name type="scientific">Arabidopsis thaliana</name>
    <name type="common">Mouse-ear cress</name>
    <dbReference type="NCBI Taxonomy" id="3702"/>
    <lineage>
        <taxon>Eukaryota</taxon>
        <taxon>Viridiplantae</taxon>
        <taxon>Streptophyta</taxon>
        <taxon>Embryophyta</taxon>
        <taxon>Tracheophyta</taxon>
        <taxon>Spermatophyta</taxon>
        <taxon>Magnoliopsida</taxon>
        <taxon>eudicotyledons</taxon>
        <taxon>Gunneridae</taxon>
        <taxon>Pentapetalae</taxon>
        <taxon>rosids</taxon>
        <taxon>malvids</taxon>
        <taxon>Brassicales</taxon>
        <taxon>Brassicaceae</taxon>
        <taxon>Camelineae</taxon>
        <taxon>Arabidopsis</taxon>
    </lineage>
</organism>
<gene>
    <name evidence="17 18" type="primary">SGT1B</name>
    <name type="synonym">EDM1</name>
    <name type="synonym">ETA3</name>
    <name type="synonym">RPR1</name>
    <name evidence="20" type="ordered locus">At4g11260</name>
    <name evidence="21" type="ORF">F8L21.50</name>
</gene>
<accession>Q9SUT5</accession>
<comment type="function">
    <text evidence="6 7 8 10 11 13 14 16">Involved in plant innate immunity. Essential for race-specific resistance conferred by multiple R genes, including RPP7, recognizing different oomycete pathogen isolates like avirulent Hyaloperonospora arabidopsidis (downy mildew). Contributes additively with RAR1 to RPP5-dependent resistance. Not required for RPM1, RPS2, RPS4 and RPS5-mediated resistance. Functions as a negative regulator of RPS5 accumulation by assisting its degradation. May be involved in heat shock response by associating with HSC70-1 chaperone. Required for the SCF(TIR1)-mediated degradation of Aux/IAA proteins, but maybe not for SCF(TIR1) assembly or binding to its Aux/IAA substrates. Probably required for SCF-mediated ubiquitination, by coupling HSP90 to SCF complex for ubiquitination of HSP90 client proteins. Required for the coronatine/jasmonic acid-mediated signal transduction pathway.</text>
</comment>
<comment type="subunit">
    <text evidence="5 9 12 13 15">Interacts with RAR1 and HSP90-2. Interacts (via SGS domain) with HSC70-1 and HSC70-3.</text>
</comment>
<comment type="interaction">
    <interactant intactId="EBI-1581364">
        <id>Q9SUT5</id>
    </interactant>
    <interactant intactId="EBI-1238845">
        <id>P22953</id>
        <label>HSP70-1</label>
    </interactant>
    <organismsDiffer>false</organismsDiffer>
    <experiments>3</experiments>
</comment>
<comment type="interaction">
    <interactant intactId="EBI-1581364">
        <id>Q9SUT5</id>
    </interactant>
    <interactant intactId="EBI-1781969">
        <id>Q9SE33</id>
        <label>RAR1</label>
    </interactant>
    <organismsDiffer>false</organismsDiffer>
    <experiments>3</experiments>
</comment>
<comment type="interaction">
    <interactant intactId="EBI-1581364">
        <id>Q9SUT5</id>
    </interactant>
    <interactant intactId="EBI-10689860">
        <id>A0A0H3NF38</id>
        <label>sspH2</label>
    </interactant>
    <organismsDiffer>true</organismsDiffer>
    <experiments>2</experiments>
</comment>
<comment type="subcellular location">
    <subcellularLocation>
        <location evidence="13">Cytoplasm</location>
    </subcellularLocation>
    <subcellularLocation>
        <location evidence="13">Nucleus</location>
    </subcellularLocation>
</comment>
<comment type="induction">
    <text evidence="11">By infection with the oomycete H.parasitica (downy mildew).</text>
</comment>
<comment type="disruption phenotype">
    <text evidence="6 7 8 10 13 16">Delay in flowering time. Plants loose R gene resistance mediated by RPP2, RPP4, RPP5 and RPP7, and show reduced response to auxin, jasmonate and coronatine, and enhanced tolerance to heat shock.</text>
</comment>
<comment type="similarity">
    <text evidence="19">Belongs to the SGT1 family.</text>
</comment>
<name>SGT1B_ARATH</name>
<feature type="chain" id="PRO_0000403648" description="Protein SGT1 homolog B">
    <location>
        <begin position="1"/>
        <end position="358"/>
    </location>
</feature>
<feature type="repeat" description="TPR 1">
    <location>
        <begin position="2"/>
        <end position="35"/>
    </location>
</feature>
<feature type="repeat" description="TPR 2">
    <location>
        <begin position="37"/>
        <end position="69"/>
    </location>
</feature>
<feature type="repeat" description="TPR 3">
    <location>
        <begin position="70"/>
        <end position="103"/>
    </location>
</feature>
<feature type="domain" description="CS" evidence="3">
    <location>
        <begin position="157"/>
        <end position="246"/>
    </location>
</feature>
<feature type="domain" description="SGS" evidence="2">
    <location>
        <begin position="268"/>
        <end position="358"/>
    </location>
</feature>
<feature type="region of interest" description="Disordered" evidence="4">
    <location>
        <begin position="255"/>
        <end position="275"/>
    </location>
</feature>
<proteinExistence type="evidence at protein level"/>